<dbReference type="EMBL" id="CR628337">
    <property type="protein sequence ID" value="CAH14608.1"/>
    <property type="molecule type" value="Genomic_DNA"/>
</dbReference>
<dbReference type="RefSeq" id="WP_010946086.1">
    <property type="nucleotide sequence ID" value="NC_006369.1"/>
</dbReference>
<dbReference type="SMR" id="Q5WZK4"/>
<dbReference type="GeneID" id="57034340"/>
<dbReference type="KEGG" id="lpf:lpl0377"/>
<dbReference type="LegioList" id="lpl0377"/>
<dbReference type="HOGENOM" id="CLU_158491_1_2_6"/>
<dbReference type="Proteomes" id="UP000002517">
    <property type="component" value="Chromosome"/>
</dbReference>
<dbReference type="GO" id="GO:0022625">
    <property type="term" value="C:cytosolic large ribosomal subunit"/>
    <property type="evidence" value="ECO:0007669"/>
    <property type="project" value="TreeGrafter"/>
</dbReference>
<dbReference type="GO" id="GO:0003735">
    <property type="term" value="F:structural constituent of ribosome"/>
    <property type="evidence" value="ECO:0007669"/>
    <property type="project" value="InterPro"/>
</dbReference>
<dbReference type="GO" id="GO:0006412">
    <property type="term" value="P:translation"/>
    <property type="evidence" value="ECO:0007669"/>
    <property type="project" value="UniProtKB-UniRule"/>
</dbReference>
<dbReference type="CDD" id="cd00427">
    <property type="entry name" value="Ribosomal_L29_HIP"/>
    <property type="match status" value="1"/>
</dbReference>
<dbReference type="FunFam" id="1.10.287.310:FF:000001">
    <property type="entry name" value="50S ribosomal protein L29"/>
    <property type="match status" value="1"/>
</dbReference>
<dbReference type="Gene3D" id="1.10.287.310">
    <property type="match status" value="1"/>
</dbReference>
<dbReference type="HAMAP" id="MF_00374">
    <property type="entry name" value="Ribosomal_uL29"/>
    <property type="match status" value="1"/>
</dbReference>
<dbReference type="InterPro" id="IPR050063">
    <property type="entry name" value="Ribosomal_protein_uL29"/>
</dbReference>
<dbReference type="InterPro" id="IPR001854">
    <property type="entry name" value="Ribosomal_uL29"/>
</dbReference>
<dbReference type="InterPro" id="IPR036049">
    <property type="entry name" value="Ribosomal_uL29_sf"/>
</dbReference>
<dbReference type="NCBIfam" id="TIGR00012">
    <property type="entry name" value="L29"/>
    <property type="match status" value="1"/>
</dbReference>
<dbReference type="PANTHER" id="PTHR10916">
    <property type="entry name" value="60S RIBOSOMAL PROTEIN L35/50S RIBOSOMAL PROTEIN L29"/>
    <property type="match status" value="1"/>
</dbReference>
<dbReference type="PANTHER" id="PTHR10916:SF0">
    <property type="entry name" value="LARGE RIBOSOMAL SUBUNIT PROTEIN UL29C"/>
    <property type="match status" value="1"/>
</dbReference>
<dbReference type="Pfam" id="PF00831">
    <property type="entry name" value="Ribosomal_L29"/>
    <property type="match status" value="1"/>
</dbReference>
<dbReference type="SUPFAM" id="SSF46561">
    <property type="entry name" value="Ribosomal protein L29 (L29p)"/>
    <property type="match status" value="1"/>
</dbReference>
<gene>
    <name evidence="1" type="primary">rpmC</name>
    <name type="ordered locus">lpl0377</name>
</gene>
<keyword id="KW-0687">Ribonucleoprotein</keyword>
<keyword id="KW-0689">Ribosomal protein</keyword>
<sequence length="64" mass="7373">MKKIDELRNMSVEELQNELLSLRKDQFNLRMKKASGSLDKTHLITMVRKSVAKVKTILTEKAGK</sequence>
<feature type="chain" id="PRO_0000130409" description="Large ribosomal subunit protein uL29">
    <location>
        <begin position="1"/>
        <end position="64"/>
    </location>
</feature>
<comment type="similarity">
    <text evidence="1">Belongs to the universal ribosomal protein uL29 family.</text>
</comment>
<evidence type="ECO:0000255" key="1">
    <source>
        <dbReference type="HAMAP-Rule" id="MF_00374"/>
    </source>
</evidence>
<evidence type="ECO:0000305" key="2"/>
<organism>
    <name type="scientific">Legionella pneumophila (strain Lens)</name>
    <dbReference type="NCBI Taxonomy" id="297245"/>
    <lineage>
        <taxon>Bacteria</taxon>
        <taxon>Pseudomonadati</taxon>
        <taxon>Pseudomonadota</taxon>
        <taxon>Gammaproteobacteria</taxon>
        <taxon>Legionellales</taxon>
        <taxon>Legionellaceae</taxon>
        <taxon>Legionella</taxon>
    </lineage>
</organism>
<accession>Q5WZK4</accession>
<reference key="1">
    <citation type="journal article" date="2004" name="Nat. Genet.">
        <title>Evidence in the Legionella pneumophila genome for exploitation of host cell functions and high genome plasticity.</title>
        <authorList>
            <person name="Cazalet C."/>
            <person name="Rusniok C."/>
            <person name="Brueggemann H."/>
            <person name="Zidane N."/>
            <person name="Magnier A."/>
            <person name="Ma L."/>
            <person name="Tichit M."/>
            <person name="Jarraud S."/>
            <person name="Bouchier C."/>
            <person name="Vandenesch F."/>
            <person name="Kunst F."/>
            <person name="Etienne J."/>
            <person name="Glaser P."/>
            <person name="Buchrieser C."/>
        </authorList>
    </citation>
    <scope>NUCLEOTIDE SEQUENCE [LARGE SCALE GENOMIC DNA]</scope>
    <source>
        <strain>Lens</strain>
    </source>
</reference>
<name>RL29_LEGPL</name>
<protein>
    <recommendedName>
        <fullName evidence="1">Large ribosomal subunit protein uL29</fullName>
    </recommendedName>
    <alternativeName>
        <fullName evidence="2">50S ribosomal protein L29</fullName>
    </alternativeName>
</protein>
<proteinExistence type="inferred from homology"/>